<gene>
    <name evidence="1" type="primary">rlmN</name>
    <name type="ordered locus">Aave_1421</name>
</gene>
<sequence length="373" mass="41143">MTKNLLDFDLDGLAAFCEQLGEKRFRAVQLFRWIHQRGASDFARMSDLAKSLREKLSGCAHVAALPVISEHVSADGTVKWLFDVGDGNAVESVFIPEDDRGTLCISSQAGCAVGCRFCSTGHQGFSRNLTSGEIVAQLWFAEHALRARLGTQERVISNVVMMGMGEPLQNYTALVPALRTMLDDHGYGLSRRRLTVSTSGVVPMMDRLSQDCAVAMAVSLHAPNDALRDQLVPLNRKYPLRELLDACTRYLEHAPRDFITFEYCMLDGVNDQPEHARQLIDLVRPRGGEGVRCKFNLIPFNPFPASGLHRSNPQQVAAFAKMLSDAGIVTTVRKTRGDDIDAACGQLAGDVKDRTRAAERMARQRTIVLKPVA</sequence>
<name>RLMN_PARC0</name>
<feature type="chain" id="PRO_0000349995" description="Dual-specificity RNA methyltransferase RlmN">
    <location>
        <begin position="1"/>
        <end position="373"/>
    </location>
</feature>
<feature type="domain" description="Radical SAM core" evidence="2">
    <location>
        <begin position="97"/>
        <end position="339"/>
    </location>
</feature>
<feature type="active site" description="Proton acceptor" evidence="1">
    <location>
        <position position="91"/>
    </location>
</feature>
<feature type="active site" description="S-methylcysteine intermediate" evidence="1">
    <location>
        <position position="344"/>
    </location>
</feature>
<feature type="binding site" evidence="1">
    <location>
        <position position="111"/>
    </location>
    <ligand>
        <name>[4Fe-4S] cluster</name>
        <dbReference type="ChEBI" id="CHEBI:49883"/>
        <note>4Fe-4S-S-AdoMet</note>
    </ligand>
</feature>
<feature type="binding site" evidence="1">
    <location>
        <position position="115"/>
    </location>
    <ligand>
        <name>[4Fe-4S] cluster</name>
        <dbReference type="ChEBI" id="CHEBI:49883"/>
        <note>4Fe-4S-S-AdoMet</note>
    </ligand>
</feature>
<feature type="binding site" evidence="1">
    <location>
        <position position="118"/>
    </location>
    <ligand>
        <name>[4Fe-4S] cluster</name>
        <dbReference type="ChEBI" id="CHEBI:49883"/>
        <note>4Fe-4S-S-AdoMet</note>
    </ligand>
</feature>
<feature type="binding site" evidence="1">
    <location>
        <begin position="165"/>
        <end position="166"/>
    </location>
    <ligand>
        <name>S-adenosyl-L-methionine</name>
        <dbReference type="ChEBI" id="CHEBI:59789"/>
    </ligand>
</feature>
<feature type="binding site" evidence="1">
    <location>
        <position position="197"/>
    </location>
    <ligand>
        <name>S-adenosyl-L-methionine</name>
        <dbReference type="ChEBI" id="CHEBI:59789"/>
    </ligand>
</feature>
<feature type="binding site" evidence="1">
    <location>
        <begin position="219"/>
        <end position="221"/>
    </location>
    <ligand>
        <name>S-adenosyl-L-methionine</name>
        <dbReference type="ChEBI" id="CHEBI:59789"/>
    </ligand>
</feature>
<feature type="binding site" evidence="1">
    <location>
        <position position="301"/>
    </location>
    <ligand>
        <name>S-adenosyl-L-methionine</name>
        <dbReference type="ChEBI" id="CHEBI:59789"/>
    </ligand>
</feature>
<feature type="disulfide bond" description="(transient)" evidence="1">
    <location>
        <begin position="104"/>
        <end position="344"/>
    </location>
</feature>
<keyword id="KW-0004">4Fe-4S</keyword>
<keyword id="KW-0963">Cytoplasm</keyword>
<keyword id="KW-1015">Disulfide bond</keyword>
<keyword id="KW-0408">Iron</keyword>
<keyword id="KW-0411">Iron-sulfur</keyword>
<keyword id="KW-0479">Metal-binding</keyword>
<keyword id="KW-0489">Methyltransferase</keyword>
<keyword id="KW-0698">rRNA processing</keyword>
<keyword id="KW-0949">S-adenosyl-L-methionine</keyword>
<keyword id="KW-0808">Transferase</keyword>
<keyword id="KW-0819">tRNA processing</keyword>
<reference key="1">
    <citation type="submission" date="2006-12" db="EMBL/GenBank/DDBJ databases">
        <title>Complete sequence of Acidovorax avenae subsp. citrulli AAC00-1.</title>
        <authorList>
            <person name="Copeland A."/>
            <person name="Lucas S."/>
            <person name="Lapidus A."/>
            <person name="Barry K."/>
            <person name="Detter J.C."/>
            <person name="Glavina del Rio T."/>
            <person name="Dalin E."/>
            <person name="Tice H."/>
            <person name="Pitluck S."/>
            <person name="Kiss H."/>
            <person name="Brettin T."/>
            <person name="Bruce D."/>
            <person name="Han C."/>
            <person name="Tapia R."/>
            <person name="Gilna P."/>
            <person name="Schmutz J."/>
            <person name="Larimer F."/>
            <person name="Land M."/>
            <person name="Hauser L."/>
            <person name="Kyrpides N."/>
            <person name="Kim E."/>
            <person name="Stahl D."/>
            <person name="Richardson P."/>
        </authorList>
    </citation>
    <scope>NUCLEOTIDE SEQUENCE [LARGE SCALE GENOMIC DNA]</scope>
    <source>
        <strain>AAC00-1</strain>
    </source>
</reference>
<accession>A1TM24</accession>
<comment type="function">
    <text evidence="1">Specifically methylates position 2 of adenine 2503 in 23S rRNA and position 2 of adenine 37 in tRNAs. m2A2503 modification seems to play a crucial role in the proofreading step occurring at the peptidyl transferase center and thus would serve to optimize ribosomal fidelity.</text>
</comment>
<comment type="catalytic activity">
    <reaction evidence="1">
        <text>adenosine(2503) in 23S rRNA + 2 reduced [2Fe-2S]-[ferredoxin] + 2 S-adenosyl-L-methionine = 2-methyladenosine(2503) in 23S rRNA + 5'-deoxyadenosine + L-methionine + 2 oxidized [2Fe-2S]-[ferredoxin] + S-adenosyl-L-homocysteine</text>
        <dbReference type="Rhea" id="RHEA:42916"/>
        <dbReference type="Rhea" id="RHEA-COMP:10000"/>
        <dbReference type="Rhea" id="RHEA-COMP:10001"/>
        <dbReference type="Rhea" id="RHEA-COMP:10152"/>
        <dbReference type="Rhea" id="RHEA-COMP:10282"/>
        <dbReference type="ChEBI" id="CHEBI:17319"/>
        <dbReference type="ChEBI" id="CHEBI:33737"/>
        <dbReference type="ChEBI" id="CHEBI:33738"/>
        <dbReference type="ChEBI" id="CHEBI:57844"/>
        <dbReference type="ChEBI" id="CHEBI:57856"/>
        <dbReference type="ChEBI" id="CHEBI:59789"/>
        <dbReference type="ChEBI" id="CHEBI:74411"/>
        <dbReference type="ChEBI" id="CHEBI:74497"/>
        <dbReference type="EC" id="2.1.1.192"/>
    </reaction>
</comment>
<comment type="catalytic activity">
    <reaction evidence="1">
        <text>adenosine(37) in tRNA + 2 reduced [2Fe-2S]-[ferredoxin] + 2 S-adenosyl-L-methionine = 2-methyladenosine(37) in tRNA + 5'-deoxyadenosine + L-methionine + 2 oxidized [2Fe-2S]-[ferredoxin] + S-adenosyl-L-homocysteine</text>
        <dbReference type="Rhea" id="RHEA:43332"/>
        <dbReference type="Rhea" id="RHEA-COMP:10000"/>
        <dbReference type="Rhea" id="RHEA-COMP:10001"/>
        <dbReference type="Rhea" id="RHEA-COMP:10162"/>
        <dbReference type="Rhea" id="RHEA-COMP:10485"/>
        <dbReference type="ChEBI" id="CHEBI:17319"/>
        <dbReference type="ChEBI" id="CHEBI:33737"/>
        <dbReference type="ChEBI" id="CHEBI:33738"/>
        <dbReference type="ChEBI" id="CHEBI:57844"/>
        <dbReference type="ChEBI" id="CHEBI:57856"/>
        <dbReference type="ChEBI" id="CHEBI:59789"/>
        <dbReference type="ChEBI" id="CHEBI:74411"/>
        <dbReference type="ChEBI" id="CHEBI:74497"/>
        <dbReference type="EC" id="2.1.1.192"/>
    </reaction>
</comment>
<comment type="cofactor">
    <cofactor evidence="1">
        <name>[4Fe-4S] cluster</name>
        <dbReference type="ChEBI" id="CHEBI:49883"/>
    </cofactor>
    <text evidence="1">Binds 1 [4Fe-4S] cluster. The cluster is coordinated with 3 cysteines and an exchangeable S-adenosyl-L-methionine.</text>
</comment>
<comment type="subcellular location">
    <subcellularLocation>
        <location evidence="1">Cytoplasm</location>
    </subcellularLocation>
</comment>
<comment type="miscellaneous">
    <text evidence="1">Reaction proceeds by a ping-pong mechanism involving intermediate methylation of a conserved cysteine residue.</text>
</comment>
<comment type="similarity">
    <text evidence="1">Belongs to the radical SAM superfamily. RlmN family.</text>
</comment>
<protein>
    <recommendedName>
        <fullName evidence="1">Dual-specificity RNA methyltransferase RlmN</fullName>
        <ecNumber evidence="1">2.1.1.192</ecNumber>
    </recommendedName>
    <alternativeName>
        <fullName evidence="1">23S rRNA (adenine(2503)-C(2))-methyltransferase</fullName>
    </alternativeName>
    <alternativeName>
        <fullName evidence="1">23S rRNA m2A2503 methyltransferase</fullName>
    </alternativeName>
    <alternativeName>
        <fullName evidence="1">Ribosomal RNA large subunit methyltransferase N</fullName>
    </alternativeName>
    <alternativeName>
        <fullName evidence="1">tRNA (adenine(37)-C(2))-methyltransferase</fullName>
    </alternativeName>
    <alternativeName>
        <fullName evidence="1">tRNA m2A37 methyltransferase</fullName>
    </alternativeName>
</protein>
<proteinExistence type="inferred from homology"/>
<organism>
    <name type="scientific">Paracidovorax citrulli (strain AAC00-1)</name>
    <name type="common">Acidovorax citrulli</name>
    <dbReference type="NCBI Taxonomy" id="397945"/>
    <lineage>
        <taxon>Bacteria</taxon>
        <taxon>Pseudomonadati</taxon>
        <taxon>Pseudomonadota</taxon>
        <taxon>Betaproteobacteria</taxon>
        <taxon>Burkholderiales</taxon>
        <taxon>Comamonadaceae</taxon>
        <taxon>Paracidovorax</taxon>
    </lineage>
</organism>
<evidence type="ECO:0000255" key="1">
    <source>
        <dbReference type="HAMAP-Rule" id="MF_01849"/>
    </source>
</evidence>
<evidence type="ECO:0000255" key="2">
    <source>
        <dbReference type="PROSITE-ProRule" id="PRU01266"/>
    </source>
</evidence>
<dbReference type="EC" id="2.1.1.192" evidence="1"/>
<dbReference type="EMBL" id="CP000512">
    <property type="protein sequence ID" value="ABM32012.1"/>
    <property type="molecule type" value="Genomic_DNA"/>
</dbReference>
<dbReference type="RefSeq" id="WP_011794562.1">
    <property type="nucleotide sequence ID" value="NC_008752.1"/>
</dbReference>
<dbReference type="SMR" id="A1TM24"/>
<dbReference type="STRING" id="397945.Aave_1421"/>
<dbReference type="GeneID" id="79791085"/>
<dbReference type="KEGG" id="aav:Aave_1421"/>
<dbReference type="eggNOG" id="COG0820">
    <property type="taxonomic scope" value="Bacteria"/>
</dbReference>
<dbReference type="HOGENOM" id="CLU_029101_0_0_4"/>
<dbReference type="OrthoDB" id="9793973at2"/>
<dbReference type="Proteomes" id="UP000002596">
    <property type="component" value="Chromosome"/>
</dbReference>
<dbReference type="GO" id="GO:0005737">
    <property type="term" value="C:cytoplasm"/>
    <property type="evidence" value="ECO:0007669"/>
    <property type="project" value="UniProtKB-SubCell"/>
</dbReference>
<dbReference type="GO" id="GO:0051539">
    <property type="term" value="F:4 iron, 4 sulfur cluster binding"/>
    <property type="evidence" value="ECO:0007669"/>
    <property type="project" value="UniProtKB-UniRule"/>
</dbReference>
<dbReference type="GO" id="GO:0046872">
    <property type="term" value="F:metal ion binding"/>
    <property type="evidence" value="ECO:0007669"/>
    <property type="project" value="UniProtKB-KW"/>
</dbReference>
<dbReference type="GO" id="GO:0070040">
    <property type="term" value="F:rRNA (adenine(2503)-C2-)-methyltransferase activity"/>
    <property type="evidence" value="ECO:0007669"/>
    <property type="project" value="UniProtKB-UniRule"/>
</dbReference>
<dbReference type="GO" id="GO:0019843">
    <property type="term" value="F:rRNA binding"/>
    <property type="evidence" value="ECO:0007669"/>
    <property type="project" value="UniProtKB-UniRule"/>
</dbReference>
<dbReference type="GO" id="GO:0002935">
    <property type="term" value="F:tRNA (adenine(37)-C2)-methyltransferase activity"/>
    <property type="evidence" value="ECO:0007669"/>
    <property type="project" value="UniProtKB-UniRule"/>
</dbReference>
<dbReference type="GO" id="GO:0000049">
    <property type="term" value="F:tRNA binding"/>
    <property type="evidence" value="ECO:0007669"/>
    <property type="project" value="UniProtKB-UniRule"/>
</dbReference>
<dbReference type="GO" id="GO:0070475">
    <property type="term" value="P:rRNA base methylation"/>
    <property type="evidence" value="ECO:0007669"/>
    <property type="project" value="UniProtKB-UniRule"/>
</dbReference>
<dbReference type="GO" id="GO:0030488">
    <property type="term" value="P:tRNA methylation"/>
    <property type="evidence" value="ECO:0007669"/>
    <property type="project" value="UniProtKB-UniRule"/>
</dbReference>
<dbReference type="CDD" id="cd01335">
    <property type="entry name" value="Radical_SAM"/>
    <property type="match status" value="1"/>
</dbReference>
<dbReference type="FunFam" id="1.10.150.530:FF:000003">
    <property type="entry name" value="Dual-specificity RNA methyltransferase RlmN"/>
    <property type="match status" value="1"/>
</dbReference>
<dbReference type="FunFam" id="3.20.20.70:FF:000008">
    <property type="entry name" value="Dual-specificity RNA methyltransferase RlmN"/>
    <property type="match status" value="1"/>
</dbReference>
<dbReference type="Gene3D" id="1.10.150.530">
    <property type="match status" value="1"/>
</dbReference>
<dbReference type="Gene3D" id="3.20.20.70">
    <property type="entry name" value="Aldolase class I"/>
    <property type="match status" value="1"/>
</dbReference>
<dbReference type="HAMAP" id="MF_01849">
    <property type="entry name" value="RNA_methyltr_RlmN"/>
    <property type="match status" value="1"/>
</dbReference>
<dbReference type="InterPro" id="IPR013785">
    <property type="entry name" value="Aldolase_TIM"/>
</dbReference>
<dbReference type="InterPro" id="IPR040072">
    <property type="entry name" value="Methyltransferase_A"/>
</dbReference>
<dbReference type="InterPro" id="IPR048641">
    <property type="entry name" value="RlmN_N"/>
</dbReference>
<dbReference type="InterPro" id="IPR027492">
    <property type="entry name" value="RNA_MTrfase_RlmN"/>
</dbReference>
<dbReference type="InterPro" id="IPR004383">
    <property type="entry name" value="rRNA_lsu_MTrfase_RlmN/Cfr"/>
</dbReference>
<dbReference type="InterPro" id="IPR007197">
    <property type="entry name" value="rSAM"/>
</dbReference>
<dbReference type="NCBIfam" id="TIGR00048">
    <property type="entry name" value="rRNA_mod_RlmN"/>
    <property type="match status" value="1"/>
</dbReference>
<dbReference type="PANTHER" id="PTHR30544">
    <property type="entry name" value="23S RRNA METHYLTRANSFERASE"/>
    <property type="match status" value="1"/>
</dbReference>
<dbReference type="PANTHER" id="PTHR30544:SF5">
    <property type="entry name" value="RADICAL SAM CORE DOMAIN-CONTAINING PROTEIN"/>
    <property type="match status" value="1"/>
</dbReference>
<dbReference type="Pfam" id="PF04055">
    <property type="entry name" value="Radical_SAM"/>
    <property type="match status" value="1"/>
</dbReference>
<dbReference type="Pfam" id="PF21016">
    <property type="entry name" value="RlmN_N"/>
    <property type="match status" value="1"/>
</dbReference>
<dbReference type="PIRSF" id="PIRSF006004">
    <property type="entry name" value="CHP00048"/>
    <property type="match status" value="1"/>
</dbReference>
<dbReference type="SFLD" id="SFLDF00275">
    <property type="entry name" value="adenosine_C2_methyltransferase"/>
    <property type="match status" value="1"/>
</dbReference>
<dbReference type="SFLD" id="SFLDS00029">
    <property type="entry name" value="Radical_SAM"/>
    <property type="match status" value="1"/>
</dbReference>
<dbReference type="SUPFAM" id="SSF102114">
    <property type="entry name" value="Radical SAM enzymes"/>
    <property type="match status" value="1"/>
</dbReference>
<dbReference type="PROSITE" id="PS51918">
    <property type="entry name" value="RADICAL_SAM"/>
    <property type="match status" value="1"/>
</dbReference>